<proteinExistence type="evidence at protein level"/>
<sequence>MTVGVLALQGSFNEHIAALRRLGVQGVEIRKADQLLTVSSLIIPGGESTTMAKLAEYHNLFPALREFVKMGKPVWGTCAGLIFLADRAVGQKEGGQELVGGLDCTVHRNFFGSQIQSFEADILVPQLTSQEGGPETYRGVFIRAPAVLDVGPDVEVLADYPVPSNKVLYSSSTVQIQEEDALPETKVIVAVKQGNLLATAFHPELTADTRWHSYFIKMTKEIEQGASSSSSKTIVSVGETSAGPEPAKPDLPIFQ</sequence>
<keyword id="KW-0963">Cytoplasm</keyword>
<keyword id="KW-0315">Glutamine amidotransferase</keyword>
<keyword id="KW-0378">Hydrolase</keyword>
<keyword id="KW-0456">Lyase</keyword>
<keyword id="KW-0663">Pyridoxal phosphate</keyword>
<keyword id="KW-1185">Reference proteome</keyword>
<protein>
    <recommendedName>
        <fullName>Probable pyridoxal 5'-phosphate synthase subunit PDX2</fullName>
        <shortName>AtPDX2</shortName>
        <ecNumber evidence="5">4.3.3.6</ecNumber>
    </recommendedName>
    <alternativeName>
        <fullName>Protein EMBRYO DEFECTIVE 2407</fullName>
    </alternativeName>
    <alternativeName>
        <fullName>Pyridoxal 5'-phosphate synthase glutaminase subunit</fullName>
        <ecNumber evidence="5">3.5.1.2</ecNumber>
    </alternativeName>
</protein>
<organism>
    <name type="scientific">Arabidopsis thaliana</name>
    <name type="common">Mouse-ear cress</name>
    <dbReference type="NCBI Taxonomy" id="3702"/>
    <lineage>
        <taxon>Eukaryota</taxon>
        <taxon>Viridiplantae</taxon>
        <taxon>Streptophyta</taxon>
        <taxon>Embryophyta</taxon>
        <taxon>Tracheophyta</taxon>
        <taxon>Spermatophyta</taxon>
        <taxon>Magnoliopsida</taxon>
        <taxon>eudicotyledons</taxon>
        <taxon>Gunneridae</taxon>
        <taxon>Pentapetalae</taxon>
        <taxon>rosids</taxon>
        <taxon>malvids</taxon>
        <taxon>Brassicales</taxon>
        <taxon>Brassicaceae</taxon>
        <taxon>Camelineae</taxon>
        <taxon>Arabidopsis</taxon>
    </lineage>
</organism>
<reference key="1">
    <citation type="journal article" date="1998" name="DNA Res.">
        <title>Structural analysis of Arabidopsis thaliana chromosome 5. V. Sequence features of the regions of 1,381,565 bp covered by twenty one physically assigned P1 and TAC clones.</title>
        <authorList>
            <person name="Kaneko T."/>
            <person name="Kotani H."/>
            <person name="Nakamura Y."/>
            <person name="Sato S."/>
            <person name="Asamizu E."/>
            <person name="Miyajima N."/>
            <person name="Tabata S."/>
        </authorList>
    </citation>
    <scope>NUCLEOTIDE SEQUENCE [LARGE SCALE GENOMIC DNA]</scope>
    <source>
        <strain>cv. Columbia</strain>
    </source>
</reference>
<reference key="2">
    <citation type="journal article" date="2017" name="Plant J.">
        <title>Araport11: a complete reannotation of the Arabidopsis thaliana reference genome.</title>
        <authorList>
            <person name="Cheng C.Y."/>
            <person name="Krishnakumar V."/>
            <person name="Chan A.P."/>
            <person name="Thibaud-Nissen F."/>
            <person name="Schobel S."/>
            <person name="Town C.D."/>
        </authorList>
    </citation>
    <scope>GENOME REANNOTATION</scope>
    <source>
        <strain>cv. Columbia</strain>
    </source>
</reference>
<reference key="3">
    <citation type="journal article" date="2002" name="Science">
        <title>Functional annotation of a full-length Arabidopsis cDNA collection.</title>
        <authorList>
            <person name="Seki M."/>
            <person name="Narusaka M."/>
            <person name="Kamiya A."/>
            <person name="Ishida J."/>
            <person name="Satou M."/>
            <person name="Sakurai T."/>
            <person name="Nakajima M."/>
            <person name="Enju A."/>
            <person name="Akiyama K."/>
            <person name="Oono Y."/>
            <person name="Muramatsu M."/>
            <person name="Hayashizaki Y."/>
            <person name="Kawai J."/>
            <person name="Carninci P."/>
            <person name="Itoh M."/>
            <person name="Ishii Y."/>
            <person name="Arakawa T."/>
            <person name="Shibata K."/>
            <person name="Shinagawa A."/>
            <person name="Shinozaki K."/>
        </authorList>
    </citation>
    <scope>NUCLEOTIDE SEQUENCE [LARGE SCALE MRNA]</scope>
    <source>
        <strain>cv. Columbia</strain>
    </source>
</reference>
<reference key="4">
    <citation type="journal article" date="2003" name="Science">
        <title>Empirical analysis of transcriptional activity in the Arabidopsis genome.</title>
        <authorList>
            <person name="Yamada K."/>
            <person name="Lim J."/>
            <person name="Dale J.M."/>
            <person name="Chen H."/>
            <person name="Shinn P."/>
            <person name="Palm C.J."/>
            <person name="Southwick A.M."/>
            <person name="Wu H.C."/>
            <person name="Kim C.J."/>
            <person name="Nguyen M."/>
            <person name="Pham P.K."/>
            <person name="Cheuk R.F."/>
            <person name="Karlin-Newmann G."/>
            <person name="Liu S.X."/>
            <person name="Lam B."/>
            <person name="Sakano H."/>
            <person name="Wu T."/>
            <person name="Yu G."/>
            <person name="Miranda M."/>
            <person name="Quach H.L."/>
            <person name="Tripp M."/>
            <person name="Chang C.H."/>
            <person name="Lee J.M."/>
            <person name="Toriumi M.J."/>
            <person name="Chan M.M."/>
            <person name="Tang C.C."/>
            <person name="Onodera C.S."/>
            <person name="Deng J.M."/>
            <person name="Akiyama K."/>
            <person name="Ansari Y."/>
            <person name="Arakawa T."/>
            <person name="Banh J."/>
            <person name="Banno F."/>
            <person name="Bowser L."/>
            <person name="Brooks S.Y."/>
            <person name="Carninci P."/>
            <person name="Chao Q."/>
            <person name="Choy N."/>
            <person name="Enju A."/>
            <person name="Goldsmith A.D."/>
            <person name="Gurjal M."/>
            <person name="Hansen N.F."/>
            <person name="Hayashizaki Y."/>
            <person name="Johnson-Hopson C."/>
            <person name="Hsuan V.W."/>
            <person name="Iida K."/>
            <person name="Karnes M."/>
            <person name="Khan S."/>
            <person name="Koesema E."/>
            <person name="Ishida J."/>
            <person name="Jiang P.X."/>
            <person name="Jones T."/>
            <person name="Kawai J."/>
            <person name="Kamiya A."/>
            <person name="Meyers C."/>
            <person name="Nakajima M."/>
            <person name="Narusaka M."/>
            <person name="Seki M."/>
            <person name="Sakurai T."/>
            <person name="Satou M."/>
            <person name="Tamse R."/>
            <person name="Vaysberg M."/>
            <person name="Wallender E.K."/>
            <person name="Wong C."/>
            <person name="Yamamura Y."/>
            <person name="Yuan S."/>
            <person name="Shinozaki K."/>
            <person name="Davis R.W."/>
            <person name="Theologis A."/>
            <person name="Ecker J.R."/>
        </authorList>
    </citation>
    <scope>NUCLEOTIDE SEQUENCE [LARGE SCALE MRNA]</scope>
    <source>
        <strain>cv. Columbia</strain>
    </source>
</reference>
<reference key="5">
    <citation type="submission" date="2002-03" db="EMBL/GenBank/DDBJ databases">
        <title>Full-length cDNA from Arabidopsis thaliana.</title>
        <authorList>
            <person name="Brover V.V."/>
            <person name="Troukhan M.E."/>
            <person name="Alexandrov N.A."/>
            <person name="Lu Y.-P."/>
            <person name="Flavell R.B."/>
            <person name="Feldmann K.A."/>
        </authorList>
    </citation>
    <scope>NUCLEOTIDE SEQUENCE [LARGE SCALE MRNA]</scope>
</reference>
<reference key="6">
    <citation type="submission" date="2005-03" db="EMBL/GenBank/DDBJ databases">
        <title>Large-scale analysis of RIKEN Arabidopsis full-length (RAFL) cDNAs.</title>
        <authorList>
            <person name="Totoki Y."/>
            <person name="Seki M."/>
            <person name="Ishida J."/>
            <person name="Nakajima M."/>
            <person name="Enju A."/>
            <person name="Kamiya A."/>
            <person name="Narusaka M."/>
            <person name="Shin-i T."/>
            <person name="Nakagawa M."/>
            <person name="Sakamoto N."/>
            <person name="Oishi K."/>
            <person name="Kohara Y."/>
            <person name="Kobayashi M."/>
            <person name="Toyoda A."/>
            <person name="Sakaki Y."/>
            <person name="Sakurai T."/>
            <person name="Iida K."/>
            <person name="Akiyama K."/>
            <person name="Satou M."/>
            <person name="Toyoda T."/>
            <person name="Konagaya A."/>
            <person name="Carninci P."/>
            <person name="Kawai J."/>
            <person name="Hayashizaki Y."/>
            <person name="Shinozaki K."/>
        </authorList>
    </citation>
    <scope>NUCLEOTIDE SEQUENCE [LARGE SCALE MRNA] OF 211-255</scope>
    <source>
        <strain>cv. Columbia</strain>
    </source>
</reference>
<reference key="7">
    <citation type="journal article" date="2005" name="Proc. Natl. Acad. Sci. U.S.A.">
        <title>Vitamin B6 biosynthesis in higher plants.</title>
        <authorList>
            <person name="Tambasco-Studart M."/>
            <person name="Titiz O."/>
            <person name="Raschle T."/>
            <person name="Forster G."/>
            <person name="Amrhein N."/>
            <person name="Fitzpatrick T.B."/>
        </authorList>
    </citation>
    <scope>FUNCTION</scope>
    <scope>SUBCELLULAR LOCATION</scope>
    <scope>DISRUPTION PHENOTYPE</scope>
</reference>
<reference key="8">
    <citation type="journal article" date="2006" name="Plant Cell">
        <title>Analysis of the Arabidopsis rsr4-1/pdx1-3 mutant reveals the critical function of the PDX1 protein family in metabolism, development, and vitamin B6 biosynthesis.</title>
        <authorList>
            <person name="Wagner S."/>
            <person name="Bernhardt A."/>
            <person name="Leuendorf J.E."/>
            <person name="Drewke C."/>
            <person name="Lytovchenko A."/>
            <person name="Mujahed N."/>
            <person name="Gurgui C."/>
            <person name="Frommer W.B."/>
            <person name="Leistner E."/>
            <person name="Fernie A.R."/>
            <person name="Hellmann H."/>
        </authorList>
    </citation>
    <scope>TISSUE SPECIFICITY</scope>
    <scope>INTERACTION WITH PDX1.1 AND PDX1.3</scope>
    <source>
        <strain>cv. C24</strain>
    </source>
</reference>
<reference key="9">
    <citation type="journal article" date="2007" name="Plant Physiol.">
        <title>Functional analysis of PDX2 from Arabidopsis, a glutaminase involved in vitamin B6 biosynthesis.</title>
        <authorList>
            <person name="Tambasco-Studart M."/>
            <person name="Tews I."/>
            <person name="Amrhein N."/>
            <person name="Fitzpatrick T.B."/>
        </authorList>
    </citation>
    <scope>FUNCTION</scope>
    <scope>CATALYTIC ACTIVITY</scope>
    <scope>BIOPHYSICOCHEMICAL PROPERTIES</scope>
</reference>
<reference key="10">
    <citation type="journal article" date="2010" name="Mol. Syst. Biol.">
        <title>Targeted interactomics reveals a complex core cell cycle machinery in Arabidopsis thaliana.</title>
        <authorList>
            <person name="Van Leene J."/>
            <person name="Hollunder J."/>
            <person name="Eeckhout D."/>
            <person name="Persiau G."/>
            <person name="Van De Slijke E."/>
            <person name="Stals H."/>
            <person name="Van Isterdael G."/>
            <person name="Verkest A."/>
            <person name="Neirynck S."/>
            <person name="Buffel Y."/>
            <person name="De Bodt S."/>
            <person name="Maere S."/>
            <person name="Laukens K."/>
            <person name="Pharazyn A."/>
            <person name="Ferreira P.C.G."/>
            <person name="Eloy N."/>
            <person name="Renne C."/>
            <person name="Meyer C."/>
            <person name="Faure J.-D."/>
            <person name="Steinbrenner J."/>
            <person name="Beynon J."/>
            <person name="Larkin J.C."/>
            <person name="Van de Peer Y."/>
            <person name="Hilson P."/>
            <person name="Kuiper M."/>
            <person name="De Veylder L."/>
            <person name="Van Onckelen H."/>
            <person name="Inze D."/>
            <person name="Witters E."/>
            <person name="De Jaeger G."/>
        </authorList>
    </citation>
    <scope>INTERACTION WITH RPA2A</scope>
</reference>
<name>PDX2_ARATH</name>
<comment type="function">
    <text evidence="3 5">Catalyzes the hydrolysis of glutamine to glutamate and ammonia as part of the biosynthesis of pyridoxal 5'-phosphate. The resulting ammonia molecule is channeled to the active site of PDX1. Involved in the indirect resistance to singlet oxygen-generating photosensitizers.</text>
</comment>
<comment type="catalytic activity">
    <reaction evidence="5">
        <text>aldehydo-D-ribose 5-phosphate + D-glyceraldehyde 3-phosphate + L-glutamine = pyridoxal 5'-phosphate + L-glutamate + phosphate + 3 H2O + H(+)</text>
        <dbReference type="Rhea" id="RHEA:31507"/>
        <dbReference type="ChEBI" id="CHEBI:15377"/>
        <dbReference type="ChEBI" id="CHEBI:15378"/>
        <dbReference type="ChEBI" id="CHEBI:29985"/>
        <dbReference type="ChEBI" id="CHEBI:43474"/>
        <dbReference type="ChEBI" id="CHEBI:58273"/>
        <dbReference type="ChEBI" id="CHEBI:58359"/>
        <dbReference type="ChEBI" id="CHEBI:59776"/>
        <dbReference type="ChEBI" id="CHEBI:597326"/>
        <dbReference type="EC" id="4.3.3.6"/>
    </reaction>
</comment>
<comment type="catalytic activity">
    <reaction evidence="5">
        <text>L-glutamine + H2O = L-glutamate + NH4(+)</text>
        <dbReference type="Rhea" id="RHEA:15889"/>
        <dbReference type="ChEBI" id="CHEBI:15377"/>
        <dbReference type="ChEBI" id="CHEBI:28938"/>
        <dbReference type="ChEBI" id="CHEBI:29985"/>
        <dbReference type="ChEBI" id="CHEBI:58359"/>
        <dbReference type="EC" id="3.5.1.2"/>
    </reaction>
</comment>
<comment type="biophysicochemical properties">
    <kinetics>
        <KM evidence="3">1.92 mM for L-glutamine</KM>
        <text evidence="3">kcat is 0.023 min(-1) for L-glutamine.</text>
    </kinetics>
</comment>
<comment type="pathway">
    <text>Cofactor biosynthesis; pyridoxal 5'-phosphate biosynthesis.</text>
</comment>
<comment type="subunit">
    <text evidence="4 6">Interacts with PDX1.1 or PDX1.3, but not with PDX1.2. Binds to RPA2A.</text>
</comment>
<comment type="subcellular location">
    <subcellularLocation>
        <location evidence="3">Cytoplasm</location>
    </subcellularLocation>
</comment>
<comment type="tissue specificity">
    <text evidence="4">Strongly expressed in roots, stems, leaves and flowers.</text>
</comment>
<comment type="disruption phenotype">
    <text evidence="3">Embryonic lethality when homozygous.</text>
</comment>
<comment type="miscellaneous">
    <text>In plants, synthesis of vitamin B6 does not involve deoxyxylulose 5-phosphate but utilizes intermediates from the pentose phosphate pathway and from glycolysis.</text>
</comment>
<comment type="miscellaneous">
    <text>Vitamin B6 is an essential quencher of singlet oxygen in plants, that can protect cellular membranes from lipid peroxidation.</text>
</comment>
<comment type="similarity">
    <text evidence="7">Belongs to the glutaminase PdxT/SNO family.</text>
</comment>
<comment type="sequence caution" evidence="7">
    <conflict type="erroneous gene model prediction">
        <sequence resource="EMBL-CDS" id="BAB08237"/>
    </conflict>
</comment>
<comment type="sequence caution" evidence="7">
    <conflict type="erroneous initiation">
        <sequence resource="EMBL-CDS" id="BAD94363"/>
    </conflict>
    <text>Truncated N-terminus.</text>
</comment>
<evidence type="ECO:0000250" key="1">
    <source>
        <dbReference type="UniProtKB" id="P37528"/>
    </source>
</evidence>
<evidence type="ECO:0000256" key="2">
    <source>
        <dbReference type="SAM" id="MobiDB-lite"/>
    </source>
</evidence>
<evidence type="ECO:0000269" key="3">
    <source>
    </source>
</evidence>
<evidence type="ECO:0000269" key="4">
    <source>
    </source>
</evidence>
<evidence type="ECO:0000269" key="5">
    <source>
    </source>
</evidence>
<evidence type="ECO:0000269" key="6">
    <source>
    </source>
</evidence>
<evidence type="ECO:0000305" key="7"/>
<accession>Q8LAD0</accession>
<accession>Q56ZP9</accession>
<accession>Q9FKJ3</accession>
<dbReference type="EC" id="4.3.3.6" evidence="5"/>
<dbReference type="EC" id="3.5.1.2" evidence="5"/>
<dbReference type="EMBL" id="AB011483">
    <property type="protein sequence ID" value="BAB08237.1"/>
    <property type="status" value="ALT_SEQ"/>
    <property type="molecule type" value="Genomic_DNA"/>
</dbReference>
<dbReference type="EMBL" id="CP002688">
    <property type="protein sequence ID" value="AED97341.1"/>
    <property type="molecule type" value="Genomic_DNA"/>
</dbReference>
<dbReference type="EMBL" id="AK117313">
    <property type="protein sequence ID" value="BAC41984.1"/>
    <property type="molecule type" value="mRNA"/>
</dbReference>
<dbReference type="EMBL" id="BT005266">
    <property type="protein sequence ID" value="AAO63330.1"/>
    <property type="molecule type" value="mRNA"/>
</dbReference>
<dbReference type="EMBL" id="AY087902">
    <property type="protein sequence ID" value="AAM65453.1"/>
    <property type="molecule type" value="mRNA"/>
</dbReference>
<dbReference type="EMBL" id="AK220914">
    <property type="protein sequence ID" value="BAD94363.1"/>
    <property type="status" value="ALT_INIT"/>
    <property type="molecule type" value="mRNA"/>
</dbReference>
<dbReference type="RefSeq" id="NP_568922.1">
    <property type="nucleotide sequence ID" value="NM_125447.2"/>
</dbReference>
<dbReference type="SMR" id="Q8LAD0"/>
<dbReference type="BioGRID" id="21419">
    <property type="interactions" value="6"/>
</dbReference>
<dbReference type="FunCoup" id="Q8LAD0">
    <property type="interactions" value="408"/>
</dbReference>
<dbReference type="IntAct" id="Q8LAD0">
    <property type="interactions" value="5"/>
</dbReference>
<dbReference type="STRING" id="3702.Q8LAD0"/>
<dbReference type="MEROPS" id="C26.A32"/>
<dbReference type="PaxDb" id="3702-AT5G60540.1"/>
<dbReference type="ProteomicsDB" id="251262"/>
<dbReference type="EnsemblPlants" id="AT5G60540.1">
    <property type="protein sequence ID" value="AT5G60540.1"/>
    <property type="gene ID" value="AT5G60540"/>
</dbReference>
<dbReference type="GeneID" id="836175"/>
<dbReference type="Gramene" id="AT5G60540.1">
    <property type="protein sequence ID" value="AT5G60540.1"/>
    <property type="gene ID" value="AT5G60540"/>
</dbReference>
<dbReference type="KEGG" id="ath:AT5G60540"/>
<dbReference type="Araport" id="AT5G60540"/>
<dbReference type="TAIR" id="AT5G60540">
    <property type="gene designation" value="PDX2"/>
</dbReference>
<dbReference type="eggNOG" id="KOG3210">
    <property type="taxonomic scope" value="Eukaryota"/>
</dbReference>
<dbReference type="HOGENOM" id="CLU_069674_1_0_1"/>
<dbReference type="InParanoid" id="Q8LAD0"/>
<dbReference type="OMA" id="GMIMLAD"/>
<dbReference type="OrthoDB" id="2039at2759"/>
<dbReference type="PhylomeDB" id="Q8LAD0"/>
<dbReference type="BioCyc" id="ARA:AT5G60540-MONOMER"/>
<dbReference type="BioCyc" id="MetaCyc:AT5G60540-MONOMER"/>
<dbReference type="UniPathway" id="UPA00245"/>
<dbReference type="PRO" id="PR:Q8LAD0"/>
<dbReference type="Proteomes" id="UP000006548">
    <property type="component" value="Chromosome 5"/>
</dbReference>
<dbReference type="ExpressionAtlas" id="Q8LAD0">
    <property type="expression patterns" value="baseline and differential"/>
</dbReference>
<dbReference type="GO" id="GO:0005829">
    <property type="term" value="C:cytosol"/>
    <property type="evidence" value="ECO:0000314"/>
    <property type="project" value="TAIR"/>
</dbReference>
<dbReference type="GO" id="GO:0004359">
    <property type="term" value="F:glutaminase activity"/>
    <property type="evidence" value="ECO:0000314"/>
    <property type="project" value="TAIR"/>
</dbReference>
<dbReference type="GO" id="GO:0046982">
    <property type="term" value="F:protein heterodimerization activity"/>
    <property type="evidence" value="ECO:0000353"/>
    <property type="project" value="TAIR"/>
</dbReference>
<dbReference type="GO" id="GO:0036381">
    <property type="term" value="F:pyridoxal 5'-phosphate synthase (glutamine hydrolysing) activity"/>
    <property type="evidence" value="ECO:0007669"/>
    <property type="project" value="UniProtKB-EC"/>
</dbReference>
<dbReference type="GO" id="GO:0042823">
    <property type="term" value="P:pyridoxal phosphate biosynthetic process"/>
    <property type="evidence" value="ECO:0007669"/>
    <property type="project" value="UniProtKB-UniPathway"/>
</dbReference>
<dbReference type="GO" id="GO:0042819">
    <property type="term" value="P:vitamin B6 biosynthetic process"/>
    <property type="evidence" value="ECO:0000315"/>
    <property type="project" value="TAIR"/>
</dbReference>
<dbReference type="CDD" id="cd01749">
    <property type="entry name" value="GATase1_PB"/>
    <property type="match status" value="1"/>
</dbReference>
<dbReference type="FunFam" id="3.40.50.880:FF:000038">
    <property type="entry name" value="Predicted protein"/>
    <property type="match status" value="1"/>
</dbReference>
<dbReference type="Gene3D" id="3.40.50.880">
    <property type="match status" value="1"/>
</dbReference>
<dbReference type="HAMAP" id="MF_01615">
    <property type="entry name" value="PdxT"/>
    <property type="match status" value="1"/>
</dbReference>
<dbReference type="InterPro" id="IPR029062">
    <property type="entry name" value="Class_I_gatase-like"/>
</dbReference>
<dbReference type="InterPro" id="IPR002161">
    <property type="entry name" value="PdxT/SNO"/>
</dbReference>
<dbReference type="InterPro" id="IPR021196">
    <property type="entry name" value="PdxT/SNO_CS"/>
</dbReference>
<dbReference type="NCBIfam" id="TIGR03800">
    <property type="entry name" value="PLP_synth_Pdx2"/>
    <property type="match status" value="1"/>
</dbReference>
<dbReference type="PANTHER" id="PTHR31559">
    <property type="entry name" value="PYRIDOXAL 5'-PHOSPHATE SYNTHASE SUBUNIT SNO"/>
    <property type="match status" value="1"/>
</dbReference>
<dbReference type="PANTHER" id="PTHR31559:SF0">
    <property type="entry name" value="PYRIDOXAL 5'-PHOSPHATE SYNTHASE SUBUNIT SNO1-RELATED"/>
    <property type="match status" value="1"/>
</dbReference>
<dbReference type="Pfam" id="PF01174">
    <property type="entry name" value="SNO"/>
    <property type="match status" value="1"/>
</dbReference>
<dbReference type="PIRSF" id="PIRSF005639">
    <property type="entry name" value="Glut_amidoT_SNO"/>
    <property type="match status" value="1"/>
</dbReference>
<dbReference type="SUPFAM" id="SSF52317">
    <property type="entry name" value="Class I glutamine amidotransferase-like"/>
    <property type="match status" value="1"/>
</dbReference>
<dbReference type="PROSITE" id="PS01236">
    <property type="entry name" value="PDXT_SNO_1"/>
    <property type="match status" value="1"/>
</dbReference>
<dbReference type="PROSITE" id="PS51130">
    <property type="entry name" value="PDXT_SNO_2"/>
    <property type="match status" value="1"/>
</dbReference>
<feature type="chain" id="PRO_0000270626" description="Probable pyridoxal 5'-phosphate synthase subunit PDX2">
    <location>
        <begin position="1"/>
        <end position="255"/>
    </location>
</feature>
<feature type="region of interest" description="Disordered" evidence="2">
    <location>
        <begin position="225"/>
        <end position="255"/>
    </location>
</feature>
<feature type="active site" description="Nucleophile" evidence="1">
    <location>
        <position position="78"/>
    </location>
</feature>
<feature type="active site" description="Charge relay system" evidence="1">
    <location>
        <position position="202"/>
    </location>
</feature>
<feature type="active site" description="Charge relay system" evidence="1">
    <location>
        <position position="204"/>
    </location>
</feature>
<feature type="binding site" evidence="1">
    <location>
        <begin position="46"/>
        <end position="48"/>
    </location>
    <ligand>
        <name>L-glutamine</name>
        <dbReference type="ChEBI" id="CHEBI:58359"/>
    </ligand>
</feature>
<feature type="binding site" evidence="1">
    <location>
        <position position="108"/>
    </location>
    <ligand>
        <name>L-glutamine</name>
        <dbReference type="ChEBI" id="CHEBI:58359"/>
    </ligand>
</feature>
<feature type="binding site" evidence="1">
    <location>
        <begin position="142"/>
        <end position="143"/>
    </location>
    <ligand>
        <name>L-glutamine</name>
        <dbReference type="ChEBI" id="CHEBI:58359"/>
    </ligand>
</feature>
<feature type="sequence conflict" description="In Ref. 6; BAD94363." evidence="7" ref="6">
    <original>H</original>
    <variation>P</variation>
    <location>
        <position position="212"/>
    </location>
</feature>
<gene>
    <name type="primary">PDX2</name>
    <name type="synonym">EMB2407</name>
    <name type="ordered locus">At5g60540</name>
    <name type="ORF">muf9.190</name>
</gene>